<sequence length="100" mass="11087">MELTPREKDKLLLFTAALVAERRLARGLKLNYPESVALISAFIMEGARDGKSVASLMEEGRHVLTREQVMEGVPEMIPDIQVEATFPDGSKLVTVHNPII</sequence>
<reference key="1">
    <citation type="submission" date="2006-09" db="EMBL/GenBank/DDBJ databases">
        <authorList>
            <consortium name="The Klebsiella pneumonia Genome Sequencing Project"/>
            <person name="McClelland M."/>
            <person name="Sanderson E.K."/>
            <person name="Spieth J."/>
            <person name="Clifton W.S."/>
            <person name="Latreille P."/>
            <person name="Sabo A."/>
            <person name="Pepin K."/>
            <person name="Bhonagiri V."/>
            <person name="Porwollik S."/>
            <person name="Ali J."/>
            <person name="Wilson R.K."/>
        </authorList>
    </citation>
    <scope>NUCLEOTIDE SEQUENCE [LARGE SCALE GENOMIC DNA]</scope>
    <source>
        <strain>ATCC 700721 / MGH 78578</strain>
    </source>
</reference>
<proteinExistence type="inferred from homology"/>
<dbReference type="EC" id="3.5.1.5" evidence="1"/>
<dbReference type="EMBL" id="CP000647">
    <property type="protein sequence ID" value="ABR78861.1"/>
    <property type="molecule type" value="Genomic_DNA"/>
</dbReference>
<dbReference type="RefSeq" id="WP_002916871.1">
    <property type="nucleotide sequence ID" value="NC_009648.1"/>
</dbReference>
<dbReference type="SMR" id="A6TE40"/>
<dbReference type="STRING" id="272620.KPN_03465"/>
<dbReference type="PaxDb" id="272620-KPN_03465"/>
<dbReference type="EnsemblBacteria" id="ABR78861">
    <property type="protein sequence ID" value="ABR78861"/>
    <property type="gene ID" value="KPN_03465"/>
</dbReference>
<dbReference type="KEGG" id="kpn:KPN_03465"/>
<dbReference type="HOGENOM" id="CLU_145825_1_0_6"/>
<dbReference type="UniPathway" id="UPA00258">
    <property type="reaction ID" value="UER00370"/>
</dbReference>
<dbReference type="Proteomes" id="UP000000265">
    <property type="component" value="Chromosome"/>
</dbReference>
<dbReference type="GO" id="GO:0005737">
    <property type="term" value="C:cytoplasm"/>
    <property type="evidence" value="ECO:0007669"/>
    <property type="project" value="UniProtKB-SubCell"/>
</dbReference>
<dbReference type="GO" id="GO:0016151">
    <property type="term" value="F:nickel cation binding"/>
    <property type="evidence" value="ECO:0007669"/>
    <property type="project" value="InterPro"/>
</dbReference>
<dbReference type="GO" id="GO:0009039">
    <property type="term" value="F:urease activity"/>
    <property type="evidence" value="ECO:0007669"/>
    <property type="project" value="UniProtKB-UniRule"/>
</dbReference>
<dbReference type="GO" id="GO:0043419">
    <property type="term" value="P:urea catabolic process"/>
    <property type="evidence" value="ECO:0007669"/>
    <property type="project" value="UniProtKB-UniRule"/>
</dbReference>
<dbReference type="CDD" id="cd00390">
    <property type="entry name" value="Urease_gamma"/>
    <property type="match status" value="1"/>
</dbReference>
<dbReference type="Gene3D" id="3.30.280.10">
    <property type="entry name" value="Urease, gamma-like subunit"/>
    <property type="match status" value="1"/>
</dbReference>
<dbReference type="HAMAP" id="MF_00739">
    <property type="entry name" value="Urease_gamma"/>
    <property type="match status" value="1"/>
</dbReference>
<dbReference type="InterPro" id="IPR012010">
    <property type="entry name" value="Urease_gamma"/>
</dbReference>
<dbReference type="InterPro" id="IPR002026">
    <property type="entry name" value="Urease_gamma/gamma-beta_su"/>
</dbReference>
<dbReference type="InterPro" id="IPR036463">
    <property type="entry name" value="Urease_gamma_sf"/>
</dbReference>
<dbReference type="InterPro" id="IPR050069">
    <property type="entry name" value="Urease_subunit"/>
</dbReference>
<dbReference type="NCBIfam" id="NF009712">
    <property type="entry name" value="PRK13241.1"/>
    <property type="match status" value="1"/>
</dbReference>
<dbReference type="NCBIfam" id="TIGR00193">
    <property type="entry name" value="urease_gam"/>
    <property type="match status" value="1"/>
</dbReference>
<dbReference type="PANTHER" id="PTHR33569">
    <property type="entry name" value="UREASE"/>
    <property type="match status" value="1"/>
</dbReference>
<dbReference type="PANTHER" id="PTHR33569:SF1">
    <property type="entry name" value="UREASE"/>
    <property type="match status" value="1"/>
</dbReference>
<dbReference type="Pfam" id="PF00547">
    <property type="entry name" value="Urease_gamma"/>
    <property type="match status" value="1"/>
</dbReference>
<dbReference type="PIRSF" id="PIRSF001223">
    <property type="entry name" value="Urease_gamma"/>
    <property type="match status" value="1"/>
</dbReference>
<dbReference type="SUPFAM" id="SSF54111">
    <property type="entry name" value="Urease, gamma-subunit"/>
    <property type="match status" value="1"/>
</dbReference>
<comment type="catalytic activity">
    <reaction evidence="1">
        <text>urea + 2 H2O + H(+) = hydrogencarbonate + 2 NH4(+)</text>
        <dbReference type="Rhea" id="RHEA:20557"/>
        <dbReference type="ChEBI" id="CHEBI:15377"/>
        <dbReference type="ChEBI" id="CHEBI:15378"/>
        <dbReference type="ChEBI" id="CHEBI:16199"/>
        <dbReference type="ChEBI" id="CHEBI:17544"/>
        <dbReference type="ChEBI" id="CHEBI:28938"/>
        <dbReference type="EC" id="3.5.1.5"/>
    </reaction>
</comment>
<comment type="pathway">
    <text evidence="1">Nitrogen metabolism; urea degradation; CO(2) and NH(3) from urea (urease route): step 1/1.</text>
</comment>
<comment type="subunit">
    <text evidence="1">Heterotrimer of UreA (gamma), UreB (beta) and UreC (alpha) subunits. Three heterotrimers associate to form the active enzyme.</text>
</comment>
<comment type="subcellular location">
    <subcellularLocation>
        <location evidence="1">Cytoplasm</location>
    </subcellularLocation>
</comment>
<comment type="similarity">
    <text evidence="1">Belongs to the urease gamma subunit family.</text>
</comment>
<accession>A6TE40</accession>
<feature type="chain" id="PRO_1000046331" description="Urease subunit gamma">
    <location>
        <begin position="1"/>
        <end position="100"/>
    </location>
</feature>
<evidence type="ECO:0000255" key="1">
    <source>
        <dbReference type="HAMAP-Rule" id="MF_00739"/>
    </source>
</evidence>
<organism>
    <name type="scientific">Klebsiella pneumoniae subsp. pneumoniae (strain ATCC 700721 / MGH 78578)</name>
    <dbReference type="NCBI Taxonomy" id="272620"/>
    <lineage>
        <taxon>Bacteria</taxon>
        <taxon>Pseudomonadati</taxon>
        <taxon>Pseudomonadota</taxon>
        <taxon>Gammaproteobacteria</taxon>
        <taxon>Enterobacterales</taxon>
        <taxon>Enterobacteriaceae</taxon>
        <taxon>Klebsiella/Raoultella group</taxon>
        <taxon>Klebsiella</taxon>
        <taxon>Klebsiella pneumoniae complex</taxon>
    </lineage>
</organism>
<gene>
    <name evidence="1" type="primary">ureA</name>
    <name type="ordered locus">KPN78578_34000</name>
    <name type="ORF">KPN_03465</name>
</gene>
<protein>
    <recommendedName>
        <fullName evidence="1">Urease subunit gamma</fullName>
        <ecNumber evidence="1">3.5.1.5</ecNumber>
    </recommendedName>
    <alternativeName>
        <fullName evidence="1">Urea amidohydrolase subunit gamma</fullName>
    </alternativeName>
</protein>
<keyword id="KW-0963">Cytoplasm</keyword>
<keyword id="KW-0378">Hydrolase</keyword>
<name>URE3_KLEP7</name>